<dbReference type="EC" id="1.1.1.37" evidence="1"/>
<dbReference type="EMBL" id="AE017282">
    <property type="protein sequence ID" value="AAU93114.1"/>
    <property type="molecule type" value="Genomic_DNA"/>
</dbReference>
<dbReference type="RefSeq" id="WP_010959955.1">
    <property type="nucleotide sequence ID" value="NC_002977.6"/>
</dbReference>
<dbReference type="SMR" id="Q60B71"/>
<dbReference type="STRING" id="243233.MCA0610"/>
<dbReference type="GeneID" id="88222941"/>
<dbReference type="KEGG" id="mca:MCA0610"/>
<dbReference type="eggNOG" id="COG0039">
    <property type="taxonomic scope" value="Bacteria"/>
</dbReference>
<dbReference type="HOGENOM" id="CLU_040727_2_0_6"/>
<dbReference type="Proteomes" id="UP000006821">
    <property type="component" value="Chromosome"/>
</dbReference>
<dbReference type="GO" id="GO:0030060">
    <property type="term" value="F:L-malate dehydrogenase (NAD+) activity"/>
    <property type="evidence" value="ECO:0007669"/>
    <property type="project" value="UniProtKB-UniRule"/>
</dbReference>
<dbReference type="GO" id="GO:0006108">
    <property type="term" value="P:malate metabolic process"/>
    <property type="evidence" value="ECO:0007669"/>
    <property type="project" value="InterPro"/>
</dbReference>
<dbReference type="GO" id="GO:0006099">
    <property type="term" value="P:tricarboxylic acid cycle"/>
    <property type="evidence" value="ECO:0007669"/>
    <property type="project" value="UniProtKB-UniRule"/>
</dbReference>
<dbReference type="CDD" id="cd01338">
    <property type="entry name" value="MDH_chloroplast-like"/>
    <property type="match status" value="1"/>
</dbReference>
<dbReference type="FunFam" id="3.40.50.720:FF:000010">
    <property type="entry name" value="Malate dehydrogenase"/>
    <property type="match status" value="1"/>
</dbReference>
<dbReference type="FunFam" id="3.90.110.10:FF:000002">
    <property type="entry name" value="Malate dehydrogenase"/>
    <property type="match status" value="1"/>
</dbReference>
<dbReference type="Gene3D" id="3.90.110.10">
    <property type="entry name" value="Lactate dehydrogenase/glycoside hydrolase, family 4, C-terminal"/>
    <property type="match status" value="1"/>
</dbReference>
<dbReference type="Gene3D" id="3.40.50.720">
    <property type="entry name" value="NAD(P)-binding Rossmann-like Domain"/>
    <property type="match status" value="1"/>
</dbReference>
<dbReference type="HAMAP" id="MF_01517">
    <property type="entry name" value="Malate_dehydrog_2"/>
    <property type="match status" value="1"/>
</dbReference>
<dbReference type="InterPro" id="IPR001557">
    <property type="entry name" value="L-lactate/malate_DH"/>
</dbReference>
<dbReference type="InterPro" id="IPR022383">
    <property type="entry name" value="Lactate/malate_DH_C"/>
</dbReference>
<dbReference type="InterPro" id="IPR001236">
    <property type="entry name" value="Lactate/malate_DH_N"/>
</dbReference>
<dbReference type="InterPro" id="IPR015955">
    <property type="entry name" value="Lactate_DH/Glyco_Ohase_4_C"/>
</dbReference>
<dbReference type="InterPro" id="IPR001252">
    <property type="entry name" value="Malate_DH_AS"/>
</dbReference>
<dbReference type="InterPro" id="IPR010945">
    <property type="entry name" value="Malate_DH_type2"/>
</dbReference>
<dbReference type="InterPro" id="IPR036291">
    <property type="entry name" value="NAD(P)-bd_dom_sf"/>
</dbReference>
<dbReference type="NCBIfam" id="TIGR01759">
    <property type="entry name" value="MalateDH-SF1"/>
    <property type="match status" value="1"/>
</dbReference>
<dbReference type="NCBIfam" id="NF003916">
    <property type="entry name" value="PRK05442.1"/>
    <property type="match status" value="1"/>
</dbReference>
<dbReference type="PANTHER" id="PTHR23382">
    <property type="entry name" value="MALATE DEHYDROGENASE"/>
    <property type="match status" value="1"/>
</dbReference>
<dbReference type="Pfam" id="PF02866">
    <property type="entry name" value="Ldh_1_C"/>
    <property type="match status" value="1"/>
</dbReference>
<dbReference type="Pfam" id="PF00056">
    <property type="entry name" value="Ldh_1_N"/>
    <property type="match status" value="1"/>
</dbReference>
<dbReference type="PIRSF" id="PIRSF000102">
    <property type="entry name" value="Lac_mal_DH"/>
    <property type="match status" value="1"/>
</dbReference>
<dbReference type="SUPFAM" id="SSF56327">
    <property type="entry name" value="LDH C-terminal domain-like"/>
    <property type="match status" value="1"/>
</dbReference>
<dbReference type="SUPFAM" id="SSF51735">
    <property type="entry name" value="NAD(P)-binding Rossmann-fold domains"/>
    <property type="match status" value="1"/>
</dbReference>
<dbReference type="PROSITE" id="PS00068">
    <property type="entry name" value="MDH"/>
    <property type="match status" value="1"/>
</dbReference>
<protein>
    <recommendedName>
        <fullName evidence="1">Malate dehydrogenase</fullName>
        <ecNumber evidence="1">1.1.1.37</ecNumber>
    </recommendedName>
</protein>
<keyword id="KW-0520">NAD</keyword>
<keyword id="KW-0560">Oxidoreductase</keyword>
<keyword id="KW-1185">Reference proteome</keyword>
<keyword id="KW-0816">Tricarboxylic acid cycle</keyword>
<name>MDH_METCA</name>
<feature type="chain" id="PRO_0000113376" description="Malate dehydrogenase">
    <location>
        <begin position="1"/>
        <end position="325"/>
    </location>
</feature>
<feature type="active site" description="Proton acceptor" evidence="1">
    <location>
        <position position="187"/>
    </location>
</feature>
<feature type="binding site" evidence="1">
    <location>
        <begin position="11"/>
        <end position="17"/>
    </location>
    <ligand>
        <name>NAD(+)</name>
        <dbReference type="ChEBI" id="CHEBI:57540"/>
    </ligand>
</feature>
<feature type="binding site" evidence="1">
    <location>
        <position position="92"/>
    </location>
    <ligand>
        <name>substrate</name>
    </ligand>
</feature>
<feature type="binding site" evidence="1">
    <location>
        <position position="98"/>
    </location>
    <ligand>
        <name>substrate</name>
    </ligand>
</feature>
<feature type="binding site" evidence="1">
    <location>
        <position position="105"/>
    </location>
    <ligand>
        <name>NAD(+)</name>
        <dbReference type="ChEBI" id="CHEBI:57540"/>
    </ligand>
</feature>
<feature type="binding site" evidence="1">
    <location>
        <position position="112"/>
    </location>
    <ligand>
        <name>NAD(+)</name>
        <dbReference type="ChEBI" id="CHEBI:57540"/>
    </ligand>
</feature>
<feature type="binding site" evidence="1">
    <location>
        <begin position="129"/>
        <end position="131"/>
    </location>
    <ligand>
        <name>NAD(+)</name>
        <dbReference type="ChEBI" id="CHEBI:57540"/>
    </ligand>
</feature>
<feature type="binding site" evidence="1">
    <location>
        <position position="131"/>
    </location>
    <ligand>
        <name>substrate</name>
    </ligand>
</feature>
<feature type="binding site" evidence="1">
    <location>
        <position position="162"/>
    </location>
    <ligand>
        <name>substrate</name>
    </ligand>
</feature>
<sequence length="325" mass="35244">MKTPVHVAVTGAAGQIAYSLLFRIAVGDLFGPHQPVILKLLDVPSAERVLEGVAMELDDCASPLLQEIEVSSDPAEVFDGAEAVFMLGATPRGPGMERRDLLQVNADIFSAQGRALNESASRRVKILVVGNPANTNALIAQRNAPDLAPGCFSAMTRLDHNRATSLLARHCGCNVAEISRVVIWGNHSPTQYPDLHHARVKGKPALSLVDPAWYVETFIPTVQQRGASVIAIRGKSSAASAANAALDHMRSWFLGTPKDDWVSMTVSSDGSYGIAEGLMFSFPVTIENGRFRIVQDLPLDTFSRERLRLTEVELLEERAMVSHLL</sequence>
<comment type="function">
    <text evidence="1">Catalyzes the reversible oxidation of malate to oxaloacetate.</text>
</comment>
<comment type="catalytic activity">
    <reaction evidence="1">
        <text>(S)-malate + NAD(+) = oxaloacetate + NADH + H(+)</text>
        <dbReference type="Rhea" id="RHEA:21432"/>
        <dbReference type="ChEBI" id="CHEBI:15378"/>
        <dbReference type="ChEBI" id="CHEBI:15589"/>
        <dbReference type="ChEBI" id="CHEBI:16452"/>
        <dbReference type="ChEBI" id="CHEBI:57540"/>
        <dbReference type="ChEBI" id="CHEBI:57945"/>
        <dbReference type="EC" id="1.1.1.37"/>
    </reaction>
</comment>
<comment type="similarity">
    <text evidence="1">Belongs to the LDH/MDH superfamily. MDH type 2 family.</text>
</comment>
<accession>Q60B71</accession>
<gene>
    <name evidence="1" type="primary">mdh</name>
    <name type="ordered locus">MCA0610</name>
</gene>
<proteinExistence type="inferred from homology"/>
<reference key="1">
    <citation type="journal article" date="2004" name="PLoS Biol.">
        <title>Genomic insights into methanotrophy: the complete genome sequence of Methylococcus capsulatus (Bath).</title>
        <authorList>
            <person name="Ward N.L."/>
            <person name="Larsen O."/>
            <person name="Sakwa J."/>
            <person name="Bruseth L."/>
            <person name="Khouri H.M."/>
            <person name="Durkin A.S."/>
            <person name="Dimitrov G."/>
            <person name="Jiang L."/>
            <person name="Scanlan D."/>
            <person name="Kang K.H."/>
            <person name="Lewis M.R."/>
            <person name="Nelson K.E."/>
            <person name="Methe B.A."/>
            <person name="Wu M."/>
            <person name="Heidelberg J.F."/>
            <person name="Paulsen I.T."/>
            <person name="Fouts D.E."/>
            <person name="Ravel J."/>
            <person name="Tettelin H."/>
            <person name="Ren Q."/>
            <person name="Read T.D."/>
            <person name="DeBoy R.T."/>
            <person name="Seshadri R."/>
            <person name="Salzberg S.L."/>
            <person name="Jensen H.B."/>
            <person name="Birkeland N.K."/>
            <person name="Nelson W.C."/>
            <person name="Dodson R.J."/>
            <person name="Grindhaug S.H."/>
            <person name="Holt I.E."/>
            <person name="Eidhammer I."/>
            <person name="Jonasen I."/>
            <person name="Vanaken S."/>
            <person name="Utterback T.R."/>
            <person name="Feldblyum T.V."/>
            <person name="Fraser C.M."/>
            <person name="Lillehaug J.R."/>
            <person name="Eisen J.A."/>
        </authorList>
    </citation>
    <scope>NUCLEOTIDE SEQUENCE [LARGE SCALE GENOMIC DNA]</scope>
    <source>
        <strain>ATCC 33009 / NCIMB 11132 / Bath</strain>
    </source>
</reference>
<organism>
    <name type="scientific">Methylococcus capsulatus (strain ATCC 33009 / NCIMB 11132 / Bath)</name>
    <dbReference type="NCBI Taxonomy" id="243233"/>
    <lineage>
        <taxon>Bacteria</taxon>
        <taxon>Pseudomonadati</taxon>
        <taxon>Pseudomonadota</taxon>
        <taxon>Gammaproteobacteria</taxon>
        <taxon>Methylococcales</taxon>
        <taxon>Methylococcaceae</taxon>
        <taxon>Methylococcus</taxon>
    </lineage>
</organism>
<evidence type="ECO:0000255" key="1">
    <source>
        <dbReference type="HAMAP-Rule" id="MF_01517"/>
    </source>
</evidence>